<reference key="1">
    <citation type="journal article" date="1991" name="Mol. Microbiol.">
        <title>A Bacillus subtilis dipeptide transport system expressed early during sporulation.</title>
        <authorList>
            <person name="Mathiopoulos C."/>
            <person name="Mueller J.P."/>
            <person name="Slack F.J."/>
            <person name="Murphy C.G."/>
            <person name="Patankar S."/>
            <person name="Bukusoglu G."/>
            <person name="Sonenshein A.L."/>
        </authorList>
    </citation>
    <scope>NUCLEOTIDE SEQUENCE [GENOMIC DNA]</scope>
    <scope>FUNCTION</scope>
    <scope>DISRUPTION PHENOTYPE</scope>
    <source>
        <strain>168</strain>
    </source>
</reference>
<reference key="2">
    <citation type="submission" date="1997-11" db="EMBL/GenBank/DDBJ databases">
        <title>Sequence of the Bacillus subtilis genome between xlyA and ykoR.</title>
        <authorList>
            <person name="Devine K.M."/>
        </authorList>
    </citation>
    <scope>NUCLEOTIDE SEQUENCE [GENOMIC DNA]</scope>
    <source>
        <strain>168</strain>
    </source>
</reference>
<reference key="3">
    <citation type="journal article" date="1997" name="Nature">
        <title>The complete genome sequence of the Gram-positive bacterium Bacillus subtilis.</title>
        <authorList>
            <person name="Kunst F."/>
            <person name="Ogasawara N."/>
            <person name="Moszer I."/>
            <person name="Albertini A.M."/>
            <person name="Alloni G."/>
            <person name="Azevedo V."/>
            <person name="Bertero M.G."/>
            <person name="Bessieres P."/>
            <person name="Bolotin A."/>
            <person name="Borchert S."/>
            <person name="Borriss R."/>
            <person name="Boursier L."/>
            <person name="Brans A."/>
            <person name="Braun M."/>
            <person name="Brignell S.C."/>
            <person name="Bron S."/>
            <person name="Brouillet S."/>
            <person name="Bruschi C.V."/>
            <person name="Caldwell B."/>
            <person name="Capuano V."/>
            <person name="Carter N.M."/>
            <person name="Choi S.-K."/>
            <person name="Codani J.-J."/>
            <person name="Connerton I.F."/>
            <person name="Cummings N.J."/>
            <person name="Daniel R.A."/>
            <person name="Denizot F."/>
            <person name="Devine K.M."/>
            <person name="Duesterhoeft A."/>
            <person name="Ehrlich S.D."/>
            <person name="Emmerson P.T."/>
            <person name="Entian K.-D."/>
            <person name="Errington J."/>
            <person name="Fabret C."/>
            <person name="Ferrari E."/>
            <person name="Foulger D."/>
            <person name="Fritz C."/>
            <person name="Fujita M."/>
            <person name="Fujita Y."/>
            <person name="Fuma S."/>
            <person name="Galizzi A."/>
            <person name="Galleron N."/>
            <person name="Ghim S.-Y."/>
            <person name="Glaser P."/>
            <person name="Goffeau A."/>
            <person name="Golightly E.J."/>
            <person name="Grandi G."/>
            <person name="Guiseppi G."/>
            <person name="Guy B.J."/>
            <person name="Haga K."/>
            <person name="Haiech J."/>
            <person name="Harwood C.R."/>
            <person name="Henaut A."/>
            <person name="Hilbert H."/>
            <person name="Holsappel S."/>
            <person name="Hosono S."/>
            <person name="Hullo M.-F."/>
            <person name="Itaya M."/>
            <person name="Jones L.-M."/>
            <person name="Joris B."/>
            <person name="Karamata D."/>
            <person name="Kasahara Y."/>
            <person name="Klaerr-Blanchard M."/>
            <person name="Klein C."/>
            <person name="Kobayashi Y."/>
            <person name="Koetter P."/>
            <person name="Koningstein G."/>
            <person name="Krogh S."/>
            <person name="Kumano M."/>
            <person name="Kurita K."/>
            <person name="Lapidus A."/>
            <person name="Lardinois S."/>
            <person name="Lauber J."/>
            <person name="Lazarevic V."/>
            <person name="Lee S.-M."/>
            <person name="Levine A."/>
            <person name="Liu H."/>
            <person name="Masuda S."/>
            <person name="Mauel C."/>
            <person name="Medigue C."/>
            <person name="Medina N."/>
            <person name="Mellado R.P."/>
            <person name="Mizuno M."/>
            <person name="Moestl D."/>
            <person name="Nakai S."/>
            <person name="Noback M."/>
            <person name="Noone D."/>
            <person name="O'Reilly M."/>
            <person name="Ogawa K."/>
            <person name="Ogiwara A."/>
            <person name="Oudega B."/>
            <person name="Park S.-H."/>
            <person name="Parro V."/>
            <person name="Pohl T.M."/>
            <person name="Portetelle D."/>
            <person name="Porwollik S."/>
            <person name="Prescott A.M."/>
            <person name="Presecan E."/>
            <person name="Pujic P."/>
            <person name="Purnelle B."/>
            <person name="Rapoport G."/>
            <person name="Rey M."/>
            <person name="Reynolds S."/>
            <person name="Rieger M."/>
            <person name="Rivolta C."/>
            <person name="Rocha E."/>
            <person name="Roche B."/>
            <person name="Rose M."/>
            <person name="Sadaie Y."/>
            <person name="Sato T."/>
            <person name="Scanlan E."/>
            <person name="Schleich S."/>
            <person name="Schroeter R."/>
            <person name="Scoffone F."/>
            <person name="Sekiguchi J."/>
            <person name="Sekowska A."/>
            <person name="Seror S.J."/>
            <person name="Serror P."/>
            <person name="Shin B.-S."/>
            <person name="Soldo B."/>
            <person name="Sorokin A."/>
            <person name="Tacconi E."/>
            <person name="Takagi T."/>
            <person name="Takahashi H."/>
            <person name="Takemaru K."/>
            <person name="Takeuchi M."/>
            <person name="Tamakoshi A."/>
            <person name="Tanaka T."/>
            <person name="Terpstra P."/>
            <person name="Tognoni A."/>
            <person name="Tosato V."/>
            <person name="Uchiyama S."/>
            <person name="Vandenbol M."/>
            <person name="Vannier F."/>
            <person name="Vassarotti A."/>
            <person name="Viari A."/>
            <person name="Wambutt R."/>
            <person name="Wedler E."/>
            <person name="Wedler H."/>
            <person name="Weitzenegger T."/>
            <person name="Winters P."/>
            <person name="Wipat A."/>
            <person name="Yamamoto H."/>
            <person name="Yamane K."/>
            <person name="Yasumoto K."/>
            <person name="Yata K."/>
            <person name="Yoshida K."/>
            <person name="Yoshikawa H.-F."/>
            <person name="Zumstein E."/>
            <person name="Yoshikawa H."/>
            <person name="Danchin A."/>
        </authorList>
    </citation>
    <scope>NUCLEOTIDE SEQUENCE [LARGE SCALE GENOMIC DNA]</scope>
    <source>
        <strain>168</strain>
    </source>
</reference>
<reference key="4">
    <citation type="journal article" date="2009" name="Microbiology">
        <title>From a consortium sequence to a unified sequence: the Bacillus subtilis 168 reference genome a decade later.</title>
        <authorList>
            <person name="Barbe V."/>
            <person name="Cruveiller S."/>
            <person name="Kunst F."/>
            <person name="Lenoble P."/>
            <person name="Meurice G."/>
            <person name="Sekowska A."/>
            <person name="Vallenet D."/>
            <person name="Wang T."/>
            <person name="Moszer I."/>
            <person name="Medigue C."/>
            <person name="Danchin A."/>
        </authorList>
    </citation>
    <scope>SEQUENCE REVISION TO 339</scope>
</reference>
<evidence type="ECO:0000255" key="1">
    <source>
        <dbReference type="PROSITE-ProRule" id="PRU00303"/>
    </source>
</evidence>
<evidence type="ECO:0000269" key="2">
    <source>
    </source>
</evidence>
<evidence type="ECO:0000305" key="3"/>
<evidence type="ECO:0000305" key="4">
    <source>
    </source>
</evidence>
<evidence type="ECO:0007829" key="5">
    <source>
        <dbReference type="PDB" id="8AY0"/>
    </source>
</evidence>
<evidence type="ECO:0007829" key="6">
    <source>
        <dbReference type="PDB" id="8AZB"/>
    </source>
</evidence>
<accession>P26906</accession>
<accession>O34801</accession>
<dbReference type="EMBL" id="X56678">
    <property type="protein sequence ID" value="CAA40006.1"/>
    <property type="molecule type" value="Genomic_DNA"/>
</dbReference>
<dbReference type="EMBL" id="AJ002571">
    <property type="protein sequence ID" value="CAA05576.1"/>
    <property type="status" value="ALT_INIT"/>
    <property type="molecule type" value="Genomic_DNA"/>
</dbReference>
<dbReference type="EMBL" id="AL009126">
    <property type="protein sequence ID" value="CAB13153.2"/>
    <property type="status" value="ALT_INIT"/>
    <property type="molecule type" value="Genomic_DNA"/>
</dbReference>
<dbReference type="PIR" id="G69618">
    <property type="entry name" value="G69618"/>
</dbReference>
<dbReference type="RefSeq" id="NP_389179.2">
    <property type="nucleotide sequence ID" value="NC_000964.3"/>
</dbReference>
<dbReference type="PDB" id="8AY0">
    <property type="method" value="X-ray"/>
    <property type="resolution" value="1.51 A"/>
    <property type="chains" value="A/B/C=23-543"/>
</dbReference>
<dbReference type="PDB" id="8AZB">
    <property type="method" value="X-ray"/>
    <property type="resolution" value="1.40 A"/>
    <property type="chains" value="A=23-543"/>
</dbReference>
<dbReference type="PDBsum" id="8AY0"/>
<dbReference type="PDBsum" id="8AZB"/>
<dbReference type="SMR" id="P26906"/>
<dbReference type="FunCoup" id="P26906">
    <property type="interactions" value="402"/>
</dbReference>
<dbReference type="STRING" id="224308.BSU12960"/>
<dbReference type="TCDB" id="3.A.1.5.2">
    <property type="family name" value="the atp-binding cassette (abc) superfamily"/>
</dbReference>
<dbReference type="PaxDb" id="224308-BSU12960"/>
<dbReference type="EnsemblBacteria" id="CAB13153">
    <property type="protein sequence ID" value="CAB13153"/>
    <property type="gene ID" value="BSU_12960"/>
</dbReference>
<dbReference type="GeneID" id="938099"/>
<dbReference type="KEGG" id="bsu:BSU12960"/>
<dbReference type="PATRIC" id="fig|224308.179.peg.1408"/>
<dbReference type="eggNOG" id="COG4166">
    <property type="taxonomic scope" value="Bacteria"/>
</dbReference>
<dbReference type="InParanoid" id="P26906"/>
<dbReference type="OrthoDB" id="9801912at2"/>
<dbReference type="BioCyc" id="BSUB:BSU12960-MONOMER"/>
<dbReference type="Proteomes" id="UP000001570">
    <property type="component" value="Chromosome"/>
</dbReference>
<dbReference type="GO" id="GO:0043190">
    <property type="term" value="C:ATP-binding cassette (ABC) transporter complex"/>
    <property type="evidence" value="ECO:0007669"/>
    <property type="project" value="InterPro"/>
</dbReference>
<dbReference type="GO" id="GO:0042597">
    <property type="term" value="C:periplasmic space"/>
    <property type="evidence" value="ECO:0007669"/>
    <property type="project" value="UniProtKB-ARBA"/>
</dbReference>
<dbReference type="GO" id="GO:1904680">
    <property type="term" value="F:peptide transmembrane transporter activity"/>
    <property type="evidence" value="ECO:0000318"/>
    <property type="project" value="GO_Central"/>
</dbReference>
<dbReference type="GO" id="GO:0015833">
    <property type="term" value="P:peptide transport"/>
    <property type="evidence" value="ECO:0000318"/>
    <property type="project" value="GO_Central"/>
</dbReference>
<dbReference type="GO" id="GO:0015031">
    <property type="term" value="P:protein transport"/>
    <property type="evidence" value="ECO:0007669"/>
    <property type="project" value="UniProtKB-KW"/>
</dbReference>
<dbReference type="GO" id="GO:0030435">
    <property type="term" value="P:sporulation resulting in formation of a cellular spore"/>
    <property type="evidence" value="ECO:0007669"/>
    <property type="project" value="UniProtKB-KW"/>
</dbReference>
<dbReference type="CDD" id="cd08504">
    <property type="entry name" value="PBP2_OppA"/>
    <property type="match status" value="1"/>
</dbReference>
<dbReference type="FunFam" id="3.90.76.10:FF:000001">
    <property type="entry name" value="Oligopeptide ABC transporter substrate-binding protein"/>
    <property type="match status" value="1"/>
</dbReference>
<dbReference type="FunFam" id="3.10.105.10:FF:000001">
    <property type="entry name" value="Oligopeptide ABC transporter, oligopeptide-binding protein"/>
    <property type="match status" value="1"/>
</dbReference>
<dbReference type="Gene3D" id="3.90.76.10">
    <property type="entry name" value="Dipeptide-binding Protein, Domain 1"/>
    <property type="match status" value="1"/>
</dbReference>
<dbReference type="Gene3D" id="3.10.105.10">
    <property type="entry name" value="Dipeptide-binding Protein, Domain 3"/>
    <property type="match status" value="1"/>
</dbReference>
<dbReference type="Gene3D" id="3.40.190.10">
    <property type="entry name" value="Periplasmic binding protein-like II"/>
    <property type="match status" value="1"/>
</dbReference>
<dbReference type="InterPro" id="IPR030678">
    <property type="entry name" value="Peptide/Ni-bd"/>
</dbReference>
<dbReference type="InterPro" id="IPR039424">
    <property type="entry name" value="SBP_5"/>
</dbReference>
<dbReference type="InterPro" id="IPR023765">
    <property type="entry name" value="SBP_5_CS"/>
</dbReference>
<dbReference type="InterPro" id="IPR000914">
    <property type="entry name" value="SBP_5_dom"/>
</dbReference>
<dbReference type="PANTHER" id="PTHR30290:SF79">
    <property type="entry name" value="DIPEPTIDE-BINDING PROTEIN DPPE"/>
    <property type="match status" value="1"/>
</dbReference>
<dbReference type="PANTHER" id="PTHR30290">
    <property type="entry name" value="PERIPLASMIC BINDING COMPONENT OF ABC TRANSPORTER"/>
    <property type="match status" value="1"/>
</dbReference>
<dbReference type="Pfam" id="PF00496">
    <property type="entry name" value="SBP_bac_5"/>
    <property type="match status" value="1"/>
</dbReference>
<dbReference type="PIRSF" id="PIRSF002741">
    <property type="entry name" value="MppA"/>
    <property type="match status" value="1"/>
</dbReference>
<dbReference type="SUPFAM" id="SSF53850">
    <property type="entry name" value="Periplasmic binding protein-like II"/>
    <property type="match status" value="1"/>
</dbReference>
<dbReference type="PROSITE" id="PS51257">
    <property type="entry name" value="PROKAR_LIPOPROTEIN"/>
    <property type="match status" value="1"/>
</dbReference>
<dbReference type="PROSITE" id="PS01040">
    <property type="entry name" value="SBP_BACTERIAL_5"/>
    <property type="match status" value="1"/>
</dbReference>
<gene>
    <name type="primary">dppE</name>
    <name type="synonym">dciAE</name>
    <name type="ordered locus">BSU12960</name>
</gene>
<sequence length="543" mass="61819">MKRVKKLWGMGLALGLSFALMGCTANEQAGKEGSHDKAKTSGEKVLYVNNENEPTSFDPPIGFNNVSWQPLNNIMEGLTRLGKDHEPEPAMAEKWSVSKDNKTYTFTIRENAKWTNGDPVTAGDFEYAWKRMLDPKKGASSAFLGYFIEGGEAYNSGKGKKDDVKVTAKDDRTLEVTLEAPQKYFLSVVSNPAYFPVNEKVDKDNPKWFAESDTFVGNGPFKLTEWKHDDSITMEKSDTYWDKDTVKLDKVKWAMVSDRNTDYQMFQSGELDTAYVPAELSDQLLDQDNVNIVDQAGLYFYRFNVNMEPFQNENIRKAFAMAVDQEEIVKYVTKNNEKPAHAFVSPGFTQPDGKDFREAGGDLIKPNESKAKQLLEKGMKEENYNKLPAITLTYSTKPEHKKIAEAIQQKLKNSLGVDVKLANMEWNVFLEDQKALKFQFSQSSFLPDYADPISFLEAFQTGNSMNRTGWANKEYDQLIKQAKNEADEKTRFSLMHQAEELLINEAPIIPVYFYNQVHLQNEQVKGIVRHPVGYIDLKWADKN</sequence>
<protein>
    <recommendedName>
        <fullName>Dipeptide-binding protein DppE</fullName>
    </recommendedName>
</protein>
<keyword id="KW-0002">3D-structure</keyword>
<keyword id="KW-1003">Cell membrane</keyword>
<keyword id="KW-0449">Lipoprotein</keyword>
<keyword id="KW-0472">Membrane</keyword>
<keyword id="KW-0564">Palmitate</keyword>
<keyword id="KW-0571">Peptide transport</keyword>
<keyword id="KW-0653">Protein transport</keyword>
<keyword id="KW-1185">Reference proteome</keyword>
<keyword id="KW-0732">Signal</keyword>
<keyword id="KW-0749">Sporulation</keyword>
<keyword id="KW-0813">Transport</keyword>
<proteinExistence type="evidence at protein level"/>
<feature type="signal peptide" evidence="1">
    <location>
        <begin position="1"/>
        <end position="22"/>
    </location>
</feature>
<feature type="chain" id="PRO_0000031788" description="Dipeptide-binding protein DppE">
    <location>
        <begin position="23"/>
        <end position="543"/>
    </location>
</feature>
<feature type="lipid moiety-binding region" description="N-palmitoyl cysteine" evidence="1">
    <location>
        <position position="23"/>
    </location>
</feature>
<feature type="lipid moiety-binding region" description="S-diacylglycerol cysteine" evidence="1">
    <location>
        <position position="23"/>
    </location>
</feature>
<feature type="sequence conflict" description="In Ref. 2; CAA05576." evidence="3" ref="2">
    <original>P</original>
    <variation>T</variation>
    <location>
        <position position="339"/>
    </location>
</feature>
<feature type="strand" evidence="6">
    <location>
        <begin position="45"/>
        <end position="49"/>
    </location>
</feature>
<feature type="turn" evidence="6">
    <location>
        <begin position="59"/>
        <end position="61"/>
    </location>
</feature>
<feature type="helix" evidence="6">
    <location>
        <begin position="65"/>
        <end position="74"/>
    </location>
</feature>
<feature type="strand" evidence="6">
    <location>
        <begin position="78"/>
        <end position="81"/>
    </location>
</feature>
<feature type="strand" evidence="6">
    <location>
        <begin position="87"/>
        <end position="97"/>
    </location>
</feature>
<feature type="strand" evidence="6">
    <location>
        <begin position="103"/>
        <end position="108"/>
    </location>
</feature>
<feature type="helix" evidence="6">
    <location>
        <begin position="122"/>
        <end position="133"/>
    </location>
</feature>
<feature type="turn" evidence="6">
    <location>
        <begin position="135"/>
        <end position="137"/>
    </location>
</feature>
<feature type="helix" evidence="6">
    <location>
        <begin position="142"/>
        <end position="147"/>
    </location>
</feature>
<feature type="helix" evidence="6">
    <location>
        <begin position="151"/>
        <end position="155"/>
    </location>
</feature>
<feature type="helix" evidence="6">
    <location>
        <begin position="161"/>
        <end position="163"/>
    </location>
</feature>
<feature type="strand" evidence="6">
    <location>
        <begin position="164"/>
        <end position="170"/>
    </location>
</feature>
<feature type="strand" evidence="6">
    <location>
        <begin position="173"/>
        <end position="180"/>
    </location>
</feature>
<feature type="helix" evidence="6">
    <location>
        <begin position="185"/>
        <end position="188"/>
    </location>
</feature>
<feature type="helix" evidence="6">
    <location>
        <begin position="192"/>
        <end position="194"/>
    </location>
</feature>
<feature type="helix" evidence="6">
    <location>
        <begin position="199"/>
        <end position="204"/>
    </location>
</feature>
<feature type="helix" evidence="6">
    <location>
        <begin position="208"/>
        <end position="210"/>
    </location>
</feature>
<feature type="helix" evidence="6">
    <location>
        <begin position="212"/>
        <end position="214"/>
    </location>
</feature>
<feature type="strand" evidence="6">
    <location>
        <begin position="219"/>
        <end position="227"/>
    </location>
</feature>
<feature type="turn" evidence="6">
    <location>
        <begin position="228"/>
        <end position="230"/>
    </location>
</feature>
<feature type="strand" evidence="6">
    <location>
        <begin position="231"/>
        <end position="236"/>
    </location>
</feature>
<feature type="helix" evidence="6">
    <location>
        <begin position="243"/>
        <end position="245"/>
    </location>
</feature>
<feature type="strand" evidence="6">
    <location>
        <begin position="249"/>
        <end position="254"/>
    </location>
</feature>
<feature type="helix" evidence="6">
    <location>
        <begin position="259"/>
        <end position="267"/>
    </location>
</feature>
<feature type="strand" evidence="6">
    <location>
        <begin position="272"/>
        <end position="274"/>
    </location>
</feature>
<feature type="helix" evidence="6">
    <location>
        <begin position="281"/>
        <end position="284"/>
    </location>
</feature>
<feature type="strand" evidence="6">
    <location>
        <begin position="290"/>
        <end position="303"/>
    </location>
</feature>
<feature type="turn" evidence="6">
    <location>
        <begin position="308"/>
        <end position="311"/>
    </location>
</feature>
<feature type="helix" evidence="6">
    <location>
        <begin position="313"/>
        <end position="322"/>
    </location>
</feature>
<feature type="helix" evidence="6">
    <location>
        <begin position="325"/>
        <end position="331"/>
    </location>
</feature>
<feature type="strand" evidence="6">
    <location>
        <begin position="341"/>
        <end position="344"/>
    </location>
</feature>
<feature type="strand" evidence="5">
    <location>
        <begin position="353"/>
        <end position="355"/>
    </location>
</feature>
<feature type="helix" evidence="6">
    <location>
        <begin position="356"/>
        <end position="360"/>
    </location>
</feature>
<feature type="helix" evidence="6">
    <location>
        <begin position="368"/>
        <end position="382"/>
    </location>
</feature>
<feature type="strand" evidence="6">
    <location>
        <begin position="390"/>
        <end position="396"/>
    </location>
</feature>
<feature type="helix" evidence="6">
    <location>
        <begin position="398"/>
        <end position="415"/>
    </location>
</feature>
<feature type="strand" evidence="6">
    <location>
        <begin position="419"/>
        <end position="424"/>
    </location>
</feature>
<feature type="helix" evidence="6">
    <location>
        <begin position="426"/>
        <end position="434"/>
    </location>
</feature>
<feature type="strand" evidence="6">
    <location>
        <begin position="439"/>
        <end position="445"/>
    </location>
</feature>
<feature type="strand" evidence="6">
    <location>
        <begin position="448"/>
        <end position="451"/>
    </location>
</feature>
<feature type="helix" evidence="6">
    <location>
        <begin position="453"/>
        <end position="456"/>
    </location>
</feature>
<feature type="helix" evidence="6">
    <location>
        <begin position="457"/>
        <end position="459"/>
    </location>
</feature>
<feature type="turn" evidence="6">
    <location>
        <begin position="464"/>
        <end position="466"/>
    </location>
</feature>
<feature type="helix" evidence="6">
    <location>
        <begin position="473"/>
        <end position="483"/>
    </location>
</feature>
<feature type="helix" evidence="6">
    <location>
        <begin position="488"/>
        <end position="505"/>
    </location>
</feature>
<feature type="strand" evidence="6">
    <location>
        <begin position="507"/>
        <end position="520"/>
    </location>
</feature>
<feature type="strand" evidence="6">
    <location>
        <begin position="531"/>
        <end position="533"/>
    </location>
</feature>
<name>DPPE_BACSU</name>
<comment type="function">
    <text evidence="4">Probably part of the ABC transporter DppBCDE involved in dipeptide transport.</text>
</comment>
<comment type="subcellular location">
    <subcellularLocation>
        <location evidence="3">Cell membrane</location>
        <topology evidence="3">Lipid-anchor</topology>
    </subcellularLocation>
</comment>
<comment type="developmental stage">
    <text>Expressed early during sporulation.</text>
</comment>
<comment type="induction">
    <text>Nutrient deficiency conditions.</text>
</comment>
<comment type="disruption phenotype">
    <text evidence="2">A null mutation abolishes the ability of a proline auxotroph to grow in a medium containing the dipeptide Pro-Gly as sole proline source.</text>
</comment>
<comment type="similarity">
    <text evidence="3">Belongs to the bacterial solute-binding protein 5 family.</text>
</comment>
<comment type="sequence caution" evidence="3">
    <conflict type="erroneous initiation">
        <sequence resource="EMBL-CDS" id="CAA05576"/>
    </conflict>
</comment>
<comment type="sequence caution" evidence="3">
    <conflict type="erroneous initiation">
        <sequence resource="EMBL-CDS" id="CAB13153"/>
    </conflict>
</comment>
<organism>
    <name type="scientific">Bacillus subtilis (strain 168)</name>
    <dbReference type="NCBI Taxonomy" id="224308"/>
    <lineage>
        <taxon>Bacteria</taxon>
        <taxon>Bacillati</taxon>
        <taxon>Bacillota</taxon>
        <taxon>Bacilli</taxon>
        <taxon>Bacillales</taxon>
        <taxon>Bacillaceae</taxon>
        <taxon>Bacillus</taxon>
    </lineage>
</organism>